<keyword id="KW-0227">DNA damage</keyword>
<keyword id="KW-0234">DNA repair</keyword>
<comment type="function">
    <text evidence="1">This protein is involved in the repair of mismatches in DNA. It is required for dam-dependent methyl-directed DNA mismatch repair. May act as a 'molecular matchmaker', a protein that promotes the formation of a stable complex between two or more DNA-binding proteins in an ATP-dependent manner without itself being part of a final effector complex.</text>
</comment>
<comment type="similarity">
    <text evidence="1">Belongs to the DNA mismatch repair MutL/HexB family.</text>
</comment>
<proteinExistence type="inferred from homology"/>
<sequence length="610" mass="68868">MTIKFLSESTINRIAAGEVIERPASVVKELVENAVDASSTKIDIILERAGKNLIIISDDGIGMTDKELEIAVERHTTSKFDESDFLNINTFGFRGEALPSIAAISKMLITSKKRDADKAFQIKLIGGNEKQVTISVHNEGTKIEIRDLFFATPARLKFLRADKTELAATVGVVKKIALAHPKISFSLTHDGKNLLKLKGQNKDAETNLKQRIIDVIGDDFIKNAAYIDFKTPDFSICGYTSSPTYNRASSEDQFLFINNRPVKDKLLQIALRVAYQDYLARDRYPICAIFLQINPQLVDVNVHPAKAEVRFHDPDYVRNLLIEAIKNALTNKSHVTSTTIASDALELFKNPLVNKQSPVSKVINVNSKSADYRPTTHSTLNTVPQNHVCQKLIDTLSHAKIEQEVENRIEHEQQIRKQYKLGAAKAQLHTTYIISQTEDSIVITDQHAAHKRLGYEKIKHYLKTEELIKQRLLIPEIVELPNEKKADCLYDHREKLYKLGLTLEKFGEKSIIVTEIPNILGDVNVQKLIQDLADHLSDFGKNIALTELIEHVTETYACHYSIRAGRKLSADEMNALLRQMENTLLSGQCNHGRPTYIELKLKDIERLFGR</sequence>
<gene>
    <name evidence="1" type="primary">mutL</name>
    <name type="ordered locus">A1G_07470</name>
</gene>
<feature type="chain" id="PRO_1000010071" description="DNA mismatch repair protein MutL">
    <location>
        <begin position="1"/>
        <end position="610"/>
    </location>
</feature>
<accession>A8GU58</accession>
<name>MUTL_RICRS</name>
<protein>
    <recommendedName>
        <fullName evidence="1">DNA mismatch repair protein MutL</fullName>
    </recommendedName>
</protein>
<organism>
    <name type="scientific">Rickettsia rickettsii (strain Sheila Smith)</name>
    <dbReference type="NCBI Taxonomy" id="392021"/>
    <lineage>
        <taxon>Bacteria</taxon>
        <taxon>Pseudomonadati</taxon>
        <taxon>Pseudomonadota</taxon>
        <taxon>Alphaproteobacteria</taxon>
        <taxon>Rickettsiales</taxon>
        <taxon>Rickettsiaceae</taxon>
        <taxon>Rickettsieae</taxon>
        <taxon>Rickettsia</taxon>
        <taxon>spotted fever group</taxon>
    </lineage>
</organism>
<evidence type="ECO:0000255" key="1">
    <source>
        <dbReference type="HAMAP-Rule" id="MF_00149"/>
    </source>
</evidence>
<reference key="1">
    <citation type="submission" date="2007-09" db="EMBL/GenBank/DDBJ databases">
        <title>Complete genome sequence of Rickettsia rickettsii.</title>
        <authorList>
            <person name="Madan A."/>
            <person name="Fahey J."/>
            <person name="Helton E."/>
            <person name="Ketteman M."/>
            <person name="Madan A."/>
            <person name="Rodrigues S."/>
            <person name="Sanchez A."/>
            <person name="Dasch G."/>
            <person name="Eremeeva M."/>
        </authorList>
    </citation>
    <scope>NUCLEOTIDE SEQUENCE [LARGE SCALE GENOMIC DNA]</scope>
    <source>
        <strain>Sheila Smith</strain>
    </source>
</reference>
<dbReference type="EMBL" id="CP000848">
    <property type="protein sequence ID" value="ABV76933.1"/>
    <property type="molecule type" value="Genomic_DNA"/>
</dbReference>
<dbReference type="RefSeq" id="WP_012151467.1">
    <property type="nucleotide sequence ID" value="NC_009882.1"/>
</dbReference>
<dbReference type="SMR" id="A8GU58"/>
<dbReference type="GeneID" id="79937956"/>
<dbReference type="KEGG" id="rri:A1G_07470"/>
<dbReference type="HOGENOM" id="CLU_004131_4_2_5"/>
<dbReference type="Proteomes" id="UP000006832">
    <property type="component" value="Chromosome"/>
</dbReference>
<dbReference type="GO" id="GO:0032300">
    <property type="term" value="C:mismatch repair complex"/>
    <property type="evidence" value="ECO:0007669"/>
    <property type="project" value="InterPro"/>
</dbReference>
<dbReference type="GO" id="GO:0005524">
    <property type="term" value="F:ATP binding"/>
    <property type="evidence" value="ECO:0007669"/>
    <property type="project" value="InterPro"/>
</dbReference>
<dbReference type="GO" id="GO:0016887">
    <property type="term" value="F:ATP hydrolysis activity"/>
    <property type="evidence" value="ECO:0007669"/>
    <property type="project" value="InterPro"/>
</dbReference>
<dbReference type="GO" id="GO:0140664">
    <property type="term" value="F:ATP-dependent DNA damage sensor activity"/>
    <property type="evidence" value="ECO:0007669"/>
    <property type="project" value="InterPro"/>
</dbReference>
<dbReference type="GO" id="GO:0030983">
    <property type="term" value="F:mismatched DNA binding"/>
    <property type="evidence" value="ECO:0007669"/>
    <property type="project" value="InterPro"/>
</dbReference>
<dbReference type="GO" id="GO:0006298">
    <property type="term" value="P:mismatch repair"/>
    <property type="evidence" value="ECO:0007669"/>
    <property type="project" value="UniProtKB-UniRule"/>
</dbReference>
<dbReference type="CDD" id="cd16926">
    <property type="entry name" value="HATPase_MutL-MLH-PMS-like"/>
    <property type="match status" value="1"/>
</dbReference>
<dbReference type="CDD" id="cd00782">
    <property type="entry name" value="MutL_Trans"/>
    <property type="match status" value="1"/>
</dbReference>
<dbReference type="FunFam" id="3.30.565.10:FF:000003">
    <property type="entry name" value="DNA mismatch repair endonuclease MutL"/>
    <property type="match status" value="1"/>
</dbReference>
<dbReference type="Gene3D" id="3.30.230.10">
    <property type="match status" value="1"/>
</dbReference>
<dbReference type="Gene3D" id="3.30.565.10">
    <property type="entry name" value="Histidine kinase-like ATPase, C-terminal domain"/>
    <property type="match status" value="1"/>
</dbReference>
<dbReference type="Gene3D" id="3.30.1540.20">
    <property type="entry name" value="MutL, C-terminal domain, dimerisation subdomain"/>
    <property type="match status" value="1"/>
</dbReference>
<dbReference type="Gene3D" id="3.30.1370.100">
    <property type="entry name" value="MutL, C-terminal domain, regulatory subdomain"/>
    <property type="match status" value="1"/>
</dbReference>
<dbReference type="HAMAP" id="MF_00149">
    <property type="entry name" value="DNA_mis_repair"/>
    <property type="match status" value="1"/>
</dbReference>
<dbReference type="InterPro" id="IPR014762">
    <property type="entry name" value="DNA_mismatch_repair_CS"/>
</dbReference>
<dbReference type="InterPro" id="IPR020667">
    <property type="entry name" value="DNA_mismatch_repair_MutL"/>
</dbReference>
<dbReference type="InterPro" id="IPR013507">
    <property type="entry name" value="DNA_mismatch_S5_2-like"/>
</dbReference>
<dbReference type="InterPro" id="IPR036890">
    <property type="entry name" value="HATPase_C_sf"/>
</dbReference>
<dbReference type="InterPro" id="IPR002099">
    <property type="entry name" value="MutL/Mlh/PMS"/>
</dbReference>
<dbReference type="InterPro" id="IPR038973">
    <property type="entry name" value="MutL/Mlh/Pms-like"/>
</dbReference>
<dbReference type="InterPro" id="IPR014790">
    <property type="entry name" value="MutL_C"/>
</dbReference>
<dbReference type="InterPro" id="IPR042120">
    <property type="entry name" value="MutL_C_dimsub"/>
</dbReference>
<dbReference type="InterPro" id="IPR042121">
    <property type="entry name" value="MutL_C_regsub"/>
</dbReference>
<dbReference type="InterPro" id="IPR037198">
    <property type="entry name" value="MutL_C_sf"/>
</dbReference>
<dbReference type="InterPro" id="IPR020568">
    <property type="entry name" value="Ribosomal_Su5_D2-typ_SF"/>
</dbReference>
<dbReference type="InterPro" id="IPR014721">
    <property type="entry name" value="Ribsml_uS5_D2-typ_fold_subgr"/>
</dbReference>
<dbReference type="NCBIfam" id="TIGR00585">
    <property type="entry name" value="mutl"/>
    <property type="match status" value="1"/>
</dbReference>
<dbReference type="NCBIfam" id="NF000952">
    <property type="entry name" value="PRK00095.2-2"/>
    <property type="match status" value="1"/>
</dbReference>
<dbReference type="NCBIfam" id="NF000953">
    <property type="entry name" value="PRK00095.2-4"/>
    <property type="match status" value="1"/>
</dbReference>
<dbReference type="PANTHER" id="PTHR10073">
    <property type="entry name" value="DNA MISMATCH REPAIR PROTEIN MLH, PMS, MUTL"/>
    <property type="match status" value="1"/>
</dbReference>
<dbReference type="PANTHER" id="PTHR10073:SF12">
    <property type="entry name" value="DNA MISMATCH REPAIR PROTEIN MLH1"/>
    <property type="match status" value="1"/>
</dbReference>
<dbReference type="Pfam" id="PF01119">
    <property type="entry name" value="DNA_mis_repair"/>
    <property type="match status" value="1"/>
</dbReference>
<dbReference type="Pfam" id="PF13589">
    <property type="entry name" value="HATPase_c_3"/>
    <property type="match status" value="1"/>
</dbReference>
<dbReference type="Pfam" id="PF08676">
    <property type="entry name" value="MutL_C"/>
    <property type="match status" value="1"/>
</dbReference>
<dbReference type="SMART" id="SM01340">
    <property type="entry name" value="DNA_mis_repair"/>
    <property type="match status" value="1"/>
</dbReference>
<dbReference type="SMART" id="SM00853">
    <property type="entry name" value="MutL_C"/>
    <property type="match status" value="1"/>
</dbReference>
<dbReference type="SUPFAM" id="SSF55874">
    <property type="entry name" value="ATPase domain of HSP90 chaperone/DNA topoisomerase II/histidine kinase"/>
    <property type="match status" value="1"/>
</dbReference>
<dbReference type="SUPFAM" id="SSF118116">
    <property type="entry name" value="DNA mismatch repair protein MutL"/>
    <property type="match status" value="1"/>
</dbReference>
<dbReference type="SUPFAM" id="SSF54211">
    <property type="entry name" value="Ribosomal protein S5 domain 2-like"/>
    <property type="match status" value="1"/>
</dbReference>
<dbReference type="PROSITE" id="PS00058">
    <property type="entry name" value="DNA_MISMATCH_REPAIR_1"/>
    <property type="match status" value="1"/>
</dbReference>